<reference key="1">
    <citation type="journal article" date="2009" name="Genome Res.">
        <title>Whole genome sequence of Desulfovibrio magneticus strain RS-1 revealed common gene clusters in magnetotactic bacteria.</title>
        <authorList>
            <person name="Nakazawa H."/>
            <person name="Arakaki A."/>
            <person name="Narita-Yamada S."/>
            <person name="Yashiro I."/>
            <person name="Jinno K."/>
            <person name="Aoki N."/>
            <person name="Tsuruyama A."/>
            <person name="Okamura Y."/>
            <person name="Tanikawa S."/>
            <person name="Fujita N."/>
            <person name="Takeyama H."/>
            <person name="Matsunaga T."/>
        </authorList>
    </citation>
    <scope>NUCLEOTIDE SEQUENCE [LARGE SCALE GENOMIC DNA]</scope>
    <source>
        <strain>ATCC 700980 / DSM 13731 / RS-1</strain>
    </source>
</reference>
<dbReference type="EC" id="3.1.-.-" evidence="1"/>
<dbReference type="EC" id="3.6.4.-" evidence="1"/>
<dbReference type="EMBL" id="AP010904">
    <property type="protein sequence ID" value="BAH75559.1"/>
    <property type="molecule type" value="Genomic_DNA"/>
</dbReference>
<dbReference type="RefSeq" id="WP_015860746.1">
    <property type="nucleotide sequence ID" value="NC_012796.1"/>
</dbReference>
<dbReference type="SMR" id="C4XS37"/>
<dbReference type="STRING" id="573370.DMR_20680"/>
<dbReference type="KEGG" id="dma:DMR_20680"/>
<dbReference type="eggNOG" id="COG1193">
    <property type="taxonomic scope" value="Bacteria"/>
</dbReference>
<dbReference type="HOGENOM" id="CLU_011252_2_1_7"/>
<dbReference type="OrthoDB" id="9808166at2"/>
<dbReference type="Proteomes" id="UP000009071">
    <property type="component" value="Chromosome"/>
</dbReference>
<dbReference type="GO" id="GO:0005524">
    <property type="term" value="F:ATP binding"/>
    <property type="evidence" value="ECO:0007669"/>
    <property type="project" value="UniProtKB-UniRule"/>
</dbReference>
<dbReference type="GO" id="GO:0016887">
    <property type="term" value="F:ATP hydrolysis activity"/>
    <property type="evidence" value="ECO:0007669"/>
    <property type="project" value="InterPro"/>
</dbReference>
<dbReference type="GO" id="GO:0140664">
    <property type="term" value="F:ATP-dependent DNA damage sensor activity"/>
    <property type="evidence" value="ECO:0007669"/>
    <property type="project" value="InterPro"/>
</dbReference>
<dbReference type="GO" id="GO:0004519">
    <property type="term" value="F:endonuclease activity"/>
    <property type="evidence" value="ECO:0007669"/>
    <property type="project" value="UniProtKB-UniRule"/>
</dbReference>
<dbReference type="GO" id="GO:0030983">
    <property type="term" value="F:mismatched DNA binding"/>
    <property type="evidence" value="ECO:0007669"/>
    <property type="project" value="InterPro"/>
</dbReference>
<dbReference type="GO" id="GO:0043023">
    <property type="term" value="F:ribosomal large subunit binding"/>
    <property type="evidence" value="ECO:0007669"/>
    <property type="project" value="UniProtKB-UniRule"/>
</dbReference>
<dbReference type="GO" id="GO:0019843">
    <property type="term" value="F:rRNA binding"/>
    <property type="evidence" value="ECO:0007669"/>
    <property type="project" value="UniProtKB-UniRule"/>
</dbReference>
<dbReference type="GO" id="GO:0006298">
    <property type="term" value="P:mismatch repair"/>
    <property type="evidence" value="ECO:0007669"/>
    <property type="project" value="InterPro"/>
</dbReference>
<dbReference type="GO" id="GO:0045910">
    <property type="term" value="P:negative regulation of DNA recombination"/>
    <property type="evidence" value="ECO:0007669"/>
    <property type="project" value="InterPro"/>
</dbReference>
<dbReference type="GO" id="GO:0072344">
    <property type="term" value="P:rescue of stalled ribosome"/>
    <property type="evidence" value="ECO:0007669"/>
    <property type="project" value="UniProtKB-UniRule"/>
</dbReference>
<dbReference type="Gene3D" id="3.30.1370.110">
    <property type="match status" value="1"/>
</dbReference>
<dbReference type="Gene3D" id="3.40.50.300">
    <property type="entry name" value="P-loop containing nucleotide triphosphate hydrolases"/>
    <property type="match status" value="1"/>
</dbReference>
<dbReference type="HAMAP" id="MF_00092">
    <property type="entry name" value="MutS2"/>
    <property type="match status" value="1"/>
</dbReference>
<dbReference type="InterPro" id="IPR000432">
    <property type="entry name" value="DNA_mismatch_repair_MutS_C"/>
</dbReference>
<dbReference type="InterPro" id="IPR007696">
    <property type="entry name" value="DNA_mismatch_repair_MutS_core"/>
</dbReference>
<dbReference type="InterPro" id="IPR036187">
    <property type="entry name" value="DNA_mismatch_repair_MutS_sf"/>
</dbReference>
<dbReference type="InterPro" id="IPR046893">
    <property type="entry name" value="MSSS"/>
</dbReference>
<dbReference type="InterPro" id="IPR045076">
    <property type="entry name" value="MutS"/>
</dbReference>
<dbReference type="InterPro" id="IPR005747">
    <property type="entry name" value="MutS2"/>
</dbReference>
<dbReference type="InterPro" id="IPR027417">
    <property type="entry name" value="P-loop_NTPase"/>
</dbReference>
<dbReference type="InterPro" id="IPR002625">
    <property type="entry name" value="Smr_dom"/>
</dbReference>
<dbReference type="InterPro" id="IPR036063">
    <property type="entry name" value="Smr_dom_sf"/>
</dbReference>
<dbReference type="NCBIfam" id="TIGR01069">
    <property type="entry name" value="mutS2"/>
    <property type="match status" value="1"/>
</dbReference>
<dbReference type="PANTHER" id="PTHR48466:SF2">
    <property type="entry name" value="OS10G0509000 PROTEIN"/>
    <property type="match status" value="1"/>
</dbReference>
<dbReference type="PANTHER" id="PTHR48466">
    <property type="entry name" value="OS10G0509000 PROTEIN-RELATED"/>
    <property type="match status" value="1"/>
</dbReference>
<dbReference type="Pfam" id="PF20297">
    <property type="entry name" value="MSSS"/>
    <property type="match status" value="1"/>
</dbReference>
<dbReference type="Pfam" id="PF00488">
    <property type="entry name" value="MutS_V"/>
    <property type="match status" value="1"/>
</dbReference>
<dbReference type="Pfam" id="PF01713">
    <property type="entry name" value="Smr"/>
    <property type="match status" value="1"/>
</dbReference>
<dbReference type="PIRSF" id="PIRSF005814">
    <property type="entry name" value="MutS_YshD"/>
    <property type="match status" value="1"/>
</dbReference>
<dbReference type="SMART" id="SM00534">
    <property type="entry name" value="MUTSac"/>
    <property type="match status" value="1"/>
</dbReference>
<dbReference type="SMART" id="SM00533">
    <property type="entry name" value="MUTSd"/>
    <property type="match status" value="1"/>
</dbReference>
<dbReference type="SMART" id="SM00463">
    <property type="entry name" value="SMR"/>
    <property type="match status" value="1"/>
</dbReference>
<dbReference type="SUPFAM" id="SSF48334">
    <property type="entry name" value="DNA repair protein MutS, domain III"/>
    <property type="match status" value="1"/>
</dbReference>
<dbReference type="SUPFAM" id="SSF52540">
    <property type="entry name" value="P-loop containing nucleoside triphosphate hydrolases"/>
    <property type="match status" value="1"/>
</dbReference>
<dbReference type="SUPFAM" id="SSF160443">
    <property type="entry name" value="SMR domain-like"/>
    <property type="match status" value="1"/>
</dbReference>
<dbReference type="PROSITE" id="PS00486">
    <property type="entry name" value="DNA_MISMATCH_REPAIR_2"/>
    <property type="match status" value="1"/>
</dbReference>
<dbReference type="PROSITE" id="PS50828">
    <property type="entry name" value="SMR"/>
    <property type="match status" value="1"/>
</dbReference>
<accession>C4XS37</accession>
<proteinExistence type="inferred from homology"/>
<sequence length="773" mass="83749">MESRTLSLLEFPKVLDRLAGYAASEPAAAACRALGPMGDAARLATEQRKLVEALELRRDRAFEFTAFPDIEPLFAVLESERRVLDLDALVALSHVLSRVAALREALGREEGDSVLGAIVYRTPWAKKTQAALARCLGPDGRLKDESSPELFSVRQEIRSIHQTILTKVKEFISERELGPLLQDDYVTISSDRYVLPLRANFKGRLPGVIHDYSQTGETIYVEPFFLVEINNRLQELKNEEREAEARVMAFLTGLARDERREVAASYRLLVDCDVLWAKAALCDAFGGTLPEVAQGRAVRLLAARHPLLALAGPDSAVAQDLELAPDQRALIVTGANAGGKTVCLKTLGLLAAMALSGLPVPAGEGSSLPFFAKIFVFLGDEQSLEDHLSTFTAQIRHLSRVWPDIDADTLVLLDEFGAGTDPSQGAALAQAVVDGLLDRGAYLAAATHFPALKAYGLSREGVRAACMLFDPATKKPLYRLAYDQVGASIALDVAREHGLPEDILERANRYLLLDGNDTGLVFDRLNDLALRREHELEAIAAKRLAEEGKIQKLKDNLKKAQDKLVEEIRELSRDIVRRHEAGRLGRKEAQKALADVRKRLIDESNELTGGPGGEAAAVAFDLSVVAPGDSVQVTSWNKIGVVREKDLKRQAAKVDIGGVSLWVNVADLAPAAGKPAKAGGGAVVTPTASEAKGLGLVVDLRGMRADVAESELLAFVDNALLRGHGELEVIHGRGTGALRREVHRMLKDHPQVASFAIAPEDRGGDGMTMVTLK</sequence>
<comment type="function">
    <text evidence="1">Endonuclease that is involved in the suppression of homologous recombination and thus may have a key role in the control of bacterial genetic diversity.</text>
</comment>
<comment type="function">
    <text evidence="1">Acts as a ribosome collision sensor, splitting the ribosome into its 2 subunits. Detects stalled/collided 70S ribosomes which it binds and splits by an ATP-hydrolysis driven conformational change. Acts upstream of the ribosome quality control system (RQC), a ribosome-associated complex that mediates the extraction of incompletely synthesized nascent chains from stalled ribosomes and their subsequent degradation. Probably generates substrates for RQC.</text>
</comment>
<comment type="subunit">
    <text evidence="1">Homodimer. Binds to stalled ribosomes, contacting rRNA.</text>
</comment>
<comment type="similarity">
    <text evidence="1">Belongs to the DNA mismatch repair MutS family. MutS2 subfamily.</text>
</comment>
<gene>
    <name evidence="1" type="primary">mutS2</name>
    <name evidence="1" type="synonym">rqcU</name>
    <name type="ordered locus">DMR_20680</name>
</gene>
<organism>
    <name type="scientific">Solidesulfovibrio magneticus (strain ATCC 700980 / DSM 13731 / RS-1)</name>
    <name type="common">Desulfovibrio magneticus</name>
    <dbReference type="NCBI Taxonomy" id="573370"/>
    <lineage>
        <taxon>Bacteria</taxon>
        <taxon>Pseudomonadati</taxon>
        <taxon>Thermodesulfobacteriota</taxon>
        <taxon>Desulfovibrionia</taxon>
        <taxon>Desulfovibrionales</taxon>
        <taxon>Desulfovibrionaceae</taxon>
        <taxon>Solidesulfovibrio</taxon>
    </lineage>
</organism>
<evidence type="ECO:0000255" key="1">
    <source>
        <dbReference type="HAMAP-Rule" id="MF_00092"/>
    </source>
</evidence>
<name>MUTS2_SOLM1</name>
<protein>
    <recommendedName>
        <fullName evidence="1">Endonuclease MutS2</fullName>
        <ecNumber evidence="1">3.1.-.-</ecNumber>
    </recommendedName>
    <alternativeName>
        <fullName evidence="1">Ribosome-associated protein quality control-upstream factor</fullName>
        <shortName evidence="1">RQC-upstream factor</shortName>
        <shortName evidence="1">RqcU</shortName>
        <ecNumber evidence="1">3.6.4.-</ecNumber>
    </alternativeName>
</protein>
<feature type="chain" id="PRO_1000202678" description="Endonuclease MutS2">
    <location>
        <begin position="1"/>
        <end position="773"/>
    </location>
</feature>
<feature type="domain" description="Smr" evidence="1">
    <location>
        <begin position="698"/>
        <end position="773"/>
    </location>
</feature>
<feature type="binding site" evidence="1">
    <location>
        <begin position="334"/>
        <end position="341"/>
    </location>
    <ligand>
        <name>ATP</name>
        <dbReference type="ChEBI" id="CHEBI:30616"/>
    </ligand>
</feature>
<keyword id="KW-0067">ATP-binding</keyword>
<keyword id="KW-0238">DNA-binding</keyword>
<keyword id="KW-0255">Endonuclease</keyword>
<keyword id="KW-0378">Hydrolase</keyword>
<keyword id="KW-0540">Nuclease</keyword>
<keyword id="KW-0547">Nucleotide-binding</keyword>
<keyword id="KW-0694">RNA-binding</keyword>
<keyword id="KW-0699">rRNA-binding</keyword>